<evidence type="ECO:0000255" key="1">
    <source>
        <dbReference type="HAMAP-Rule" id="MF_01085"/>
    </source>
</evidence>
<evidence type="ECO:0000256" key="2">
    <source>
        <dbReference type="SAM" id="MobiDB-lite"/>
    </source>
</evidence>
<keyword id="KW-0997">Cell inner membrane</keyword>
<keyword id="KW-1003">Cell membrane</keyword>
<keyword id="KW-0472">Membrane</keyword>
<keyword id="KW-1185">Reference proteome</keyword>
<keyword id="KW-0812">Transmembrane</keyword>
<keyword id="KW-1133">Transmembrane helix</keyword>
<feature type="chain" id="PRO_0000214168" description="UPF0283 membrane protein Atu1356">
    <location>
        <begin position="1"/>
        <end position="359"/>
    </location>
</feature>
<feature type="transmembrane region" description="Helical" evidence="1">
    <location>
        <begin position="75"/>
        <end position="95"/>
    </location>
</feature>
<feature type="transmembrane region" description="Helical" evidence="1">
    <location>
        <begin position="108"/>
        <end position="128"/>
    </location>
</feature>
<feature type="region of interest" description="Disordered" evidence="2">
    <location>
        <begin position="1"/>
        <end position="39"/>
    </location>
</feature>
<organism>
    <name type="scientific">Agrobacterium fabrum (strain C58 / ATCC 33970)</name>
    <name type="common">Agrobacterium tumefaciens (strain C58)</name>
    <dbReference type="NCBI Taxonomy" id="176299"/>
    <lineage>
        <taxon>Bacteria</taxon>
        <taxon>Pseudomonadati</taxon>
        <taxon>Pseudomonadota</taxon>
        <taxon>Alphaproteobacteria</taxon>
        <taxon>Hyphomicrobiales</taxon>
        <taxon>Rhizobiaceae</taxon>
        <taxon>Rhizobium/Agrobacterium group</taxon>
        <taxon>Agrobacterium</taxon>
        <taxon>Agrobacterium tumefaciens complex</taxon>
    </lineage>
</organism>
<sequence>MKAPTQNDPQTRRPAAFTLETEEAARPSATQKRAPRSFDAEISLTPDEDDPFLAPADIDAAALPVATPKKSRFSFGKLGLGALGVLFSLAFGLWADQLIRNLFSRSDWLGYTATIALIVALFAVLALVGREVFGIMRLNAVQSLKADAETASLDKSPKPARAIVTRLNAVLSHRAETAKGRAALKETENDVIDGPHLIELAERELLVPLDRQARALILNSSKRVSVVTAVSPRAVVDLAYVLFEVTRLVRAMAELYGGRPGTLGMLKLLRDVVAHLAVTGSIAVGDGLAQQVLGHGLASKLSARLGEGVINGLMTARIGIAAMDLCRPLPFRAVKRPGIGDFMSDLTPDLSGGKNGEKA</sequence>
<dbReference type="EMBL" id="AE007869">
    <property type="protein sequence ID" value="AAK87148.1"/>
    <property type="molecule type" value="Genomic_DNA"/>
</dbReference>
<dbReference type="PIR" id="AD2743">
    <property type="entry name" value="AD2743"/>
</dbReference>
<dbReference type="PIR" id="C97524">
    <property type="entry name" value="C97524"/>
</dbReference>
<dbReference type="RefSeq" id="NP_354363.1">
    <property type="nucleotide sequence ID" value="NC_003062.2"/>
</dbReference>
<dbReference type="RefSeq" id="WP_010971560.1">
    <property type="nucleotide sequence ID" value="NC_003062.2"/>
</dbReference>
<dbReference type="SMR" id="Q8UFP1"/>
<dbReference type="STRING" id="176299.Atu1356"/>
<dbReference type="EnsemblBacteria" id="AAK87148">
    <property type="protein sequence ID" value="AAK87148"/>
    <property type="gene ID" value="Atu1356"/>
</dbReference>
<dbReference type="GeneID" id="1133394"/>
<dbReference type="KEGG" id="atu:Atu1356"/>
<dbReference type="PATRIC" id="fig|176299.10.peg.1377"/>
<dbReference type="eggNOG" id="COG3768">
    <property type="taxonomic scope" value="Bacteria"/>
</dbReference>
<dbReference type="HOGENOM" id="CLU_057693_1_0_5"/>
<dbReference type="OrthoDB" id="9816060at2"/>
<dbReference type="PhylomeDB" id="Q8UFP1"/>
<dbReference type="BioCyc" id="AGRO:ATU1356-MONOMER"/>
<dbReference type="Proteomes" id="UP000000813">
    <property type="component" value="Chromosome circular"/>
</dbReference>
<dbReference type="GO" id="GO:0005886">
    <property type="term" value="C:plasma membrane"/>
    <property type="evidence" value="ECO:0007669"/>
    <property type="project" value="UniProtKB-SubCell"/>
</dbReference>
<dbReference type="HAMAP" id="MF_01085">
    <property type="entry name" value="UPF0283"/>
    <property type="match status" value="1"/>
</dbReference>
<dbReference type="InterPro" id="IPR021147">
    <property type="entry name" value="DUF697"/>
</dbReference>
<dbReference type="InterPro" id="IPR006507">
    <property type="entry name" value="UPF0283"/>
</dbReference>
<dbReference type="NCBIfam" id="TIGR01620">
    <property type="entry name" value="hyp_HI0043"/>
    <property type="match status" value="1"/>
</dbReference>
<dbReference type="PANTHER" id="PTHR39342">
    <property type="entry name" value="UPF0283 MEMBRANE PROTEIN YCJF"/>
    <property type="match status" value="1"/>
</dbReference>
<dbReference type="PANTHER" id="PTHR39342:SF1">
    <property type="entry name" value="UPF0283 MEMBRANE PROTEIN YCJF"/>
    <property type="match status" value="1"/>
</dbReference>
<dbReference type="Pfam" id="PF05128">
    <property type="entry name" value="DUF697"/>
    <property type="match status" value="1"/>
</dbReference>
<comment type="subcellular location">
    <subcellularLocation>
        <location evidence="1">Cell inner membrane</location>
        <topology evidence="1">Multi-pass membrane protein</topology>
    </subcellularLocation>
</comment>
<comment type="similarity">
    <text evidence="1">Belongs to the UPF0283 family.</text>
</comment>
<gene>
    <name type="ordered locus">Atu1356</name>
    <name type="ORF">AGR_C_2505</name>
</gene>
<name>Y1356_AGRFC</name>
<reference key="1">
    <citation type="journal article" date="2001" name="Science">
        <title>The genome of the natural genetic engineer Agrobacterium tumefaciens C58.</title>
        <authorList>
            <person name="Wood D.W."/>
            <person name="Setubal J.C."/>
            <person name="Kaul R."/>
            <person name="Monks D.E."/>
            <person name="Kitajima J.P."/>
            <person name="Okura V.K."/>
            <person name="Zhou Y."/>
            <person name="Chen L."/>
            <person name="Wood G.E."/>
            <person name="Almeida N.F. Jr."/>
            <person name="Woo L."/>
            <person name="Chen Y."/>
            <person name="Paulsen I.T."/>
            <person name="Eisen J.A."/>
            <person name="Karp P.D."/>
            <person name="Bovee D. Sr."/>
            <person name="Chapman P."/>
            <person name="Clendenning J."/>
            <person name="Deatherage G."/>
            <person name="Gillet W."/>
            <person name="Grant C."/>
            <person name="Kutyavin T."/>
            <person name="Levy R."/>
            <person name="Li M.-J."/>
            <person name="McClelland E."/>
            <person name="Palmieri A."/>
            <person name="Raymond C."/>
            <person name="Rouse G."/>
            <person name="Saenphimmachak C."/>
            <person name="Wu Z."/>
            <person name="Romero P."/>
            <person name="Gordon D."/>
            <person name="Zhang S."/>
            <person name="Yoo H."/>
            <person name="Tao Y."/>
            <person name="Biddle P."/>
            <person name="Jung M."/>
            <person name="Krespan W."/>
            <person name="Perry M."/>
            <person name="Gordon-Kamm B."/>
            <person name="Liao L."/>
            <person name="Kim S."/>
            <person name="Hendrick C."/>
            <person name="Zhao Z.-Y."/>
            <person name="Dolan M."/>
            <person name="Chumley F."/>
            <person name="Tingey S.V."/>
            <person name="Tomb J.-F."/>
            <person name="Gordon M.P."/>
            <person name="Olson M.V."/>
            <person name="Nester E.W."/>
        </authorList>
    </citation>
    <scope>NUCLEOTIDE SEQUENCE [LARGE SCALE GENOMIC DNA]</scope>
    <source>
        <strain>C58 / ATCC 33970</strain>
    </source>
</reference>
<reference key="2">
    <citation type="journal article" date="2001" name="Science">
        <title>Genome sequence of the plant pathogen and biotechnology agent Agrobacterium tumefaciens C58.</title>
        <authorList>
            <person name="Goodner B."/>
            <person name="Hinkle G."/>
            <person name="Gattung S."/>
            <person name="Miller N."/>
            <person name="Blanchard M."/>
            <person name="Qurollo B."/>
            <person name="Goldman B.S."/>
            <person name="Cao Y."/>
            <person name="Askenazi M."/>
            <person name="Halling C."/>
            <person name="Mullin L."/>
            <person name="Houmiel K."/>
            <person name="Gordon J."/>
            <person name="Vaudin M."/>
            <person name="Iartchouk O."/>
            <person name="Epp A."/>
            <person name="Liu F."/>
            <person name="Wollam C."/>
            <person name="Allinger M."/>
            <person name="Doughty D."/>
            <person name="Scott C."/>
            <person name="Lappas C."/>
            <person name="Markelz B."/>
            <person name="Flanagan C."/>
            <person name="Crowell C."/>
            <person name="Gurson J."/>
            <person name="Lomo C."/>
            <person name="Sear C."/>
            <person name="Strub G."/>
            <person name="Cielo C."/>
            <person name="Slater S."/>
        </authorList>
    </citation>
    <scope>NUCLEOTIDE SEQUENCE [LARGE SCALE GENOMIC DNA]</scope>
    <source>
        <strain>C58 / ATCC 33970</strain>
    </source>
</reference>
<proteinExistence type="inferred from homology"/>
<accession>Q8UFP1</accession>
<protein>
    <recommendedName>
        <fullName evidence="1">UPF0283 membrane protein Atu1356</fullName>
    </recommendedName>
</protein>